<evidence type="ECO:0000255" key="1">
    <source>
        <dbReference type="HAMAP-Rule" id="MF_00040"/>
    </source>
</evidence>
<gene>
    <name evidence="1" type="primary">frr</name>
    <name type="ordered locus">BPEN_282</name>
</gene>
<proteinExistence type="inferred from homology"/>
<organism>
    <name type="scientific">Blochmanniella pennsylvanica (strain BPEN)</name>
    <dbReference type="NCBI Taxonomy" id="291272"/>
    <lineage>
        <taxon>Bacteria</taxon>
        <taxon>Pseudomonadati</taxon>
        <taxon>Pseudomonadota</taxon>
        <taxon>Gammaproteobacteria</taxon>
        <taxon>Enterobacterales</taxon>
        <taxon>Enterobacteriaceae</taxon>
        <taxon>ant endosymbionts</taxon>
        <taxon>Candidatus Blochmanniella</taxon>
    </lineage>
</organism>
<comment type="function">
    <text evidence="1">Responsible for the release of ribosomes from messenger RNA at the termination of protein biosynthesis. May increase the efficiency of translation by recycling ribosomes from one round of translation to another.</text>
</comment>
<comment type="subcellular location">
    <subcellularLocation>
        <location evidence="1">Cytoplasm</location>
    </subcellularLocation>
</comment>
<comment type="similarity">
    <text evidence="1">Belongs to the RRF family.</text>
</comment>
<reference key="1">
    <citation type="journal article" date="2005" name="Genome Res.">
        <title>Genome sequence of Blochmannia pennsylvanicus indicates parallel evolutionary trends among bacterial mutualists of insects.</title>
        <authorList>
            <person name="Degnan P.H."/>
            <person name="Lazarus A.B."/>
            <person name="Wernegreen J.J."/>
        </authorList>
    </citation>
    <scope>NUCLEOTIDE SEQUENCE [LARGE SCALE GENOMIC DNA]</scope>
    <source>
        <strain>BPEN</strain>
    </source>
</reference>
<keyword id="KW-0963">Cytoplasm</keyword>
<keyword id="KW-0648">Protein biosynthesis</keyword>
<keyword id="KW-1185">Reference proteome</keyword>
<accession>Q493C9</accession>
<protein>
    <recommendedName>
        <fullName evidence="1">Ribosome-recycling factor</fullName>
        <shortName evidence="1">RRF</shortName>
    </recommendedName>
    <alternativeName>
        <fullName evidence="1">Ribosome-releasing factor</fullName>
    </alternativeName>
</protein>
<sequence>MINKIDNIQTDSEIHMKKCIKNFKTNINNIHIGRISPNILNNIRVDYYGISTPLSQVANAIVEDSRTLAITVFDHQLIKSTEKAIFMSDLELIPISYGNTIRVTLPALTEERRHTLIKMVRTEAEKSKIAVRSVRRIANDKTKILLKNKEINEDEEHFFQNEIQKLTNIWIKEIDIILAEKESELMKF</sequence>
<feature type="chain" id="PRO_1000003109" description="Ribosome-recycling factor">
    <location>
        <begin position="1"/>
        <end position="188"/>
    </location>
</feature>
<dbReference type="EMBL" id="CP000016">
    <property type="protein sequence ID" value="AAZ40913.1"/>
    <property type="molecule type" value="Genomic_DNA"/>
</dbReference>
<dbReference type="RefSeq" id="WP_011282820.1">
    <property type="nucleotide sequence ID" value="NC_007292.1"/>
</dbReference>
<dbReference type="SMR" id="Q493C9"/>
<dbReference type="STRING" id="291272.BPEN_282"/>
<dbReference type="KEGG" id="bpn:BPEN_282"/>
<dbReference type="eggNOG" id="COG0233">
    <property type="taxonomic scope" value="Bacteria"/>
</dbReference>
<dbReference type="HOGENOM" id="CLU_073981_2_0_6"/>
<dbReference type="OrthoDB" id="9804006at2"/>
<dbReference type="Proteomes" id="UP000007794">
    <property type="component" value="Chromosome"/>
</dbReference>
<dbReference type="GO" id="GO:0005829">
    <property type="term" value="C:cytosol"/>
    <property type="evidence" value="ECO:0007669"/>
    <property type="project" value="GOC"/>
</dbReference>
<dbReference type="GO" id="GO:0043023">
    <property type="term" value="F:ribosomal large subunit binding"/>
    <property type="evidence" value="ECO:0007669"/>
    <property type="project" value="TreeGrafter"/>
</dbReference>
<dbReference type="GO" id="GO:0002184">
    <property type="term" value="P:cytoplasmic translational termination"/>
    <property type="evidence" value="ECO:0007669"/>
    <property type="project" value="TreeGrafter"/>
</dbReference>
<dbReference type="CDD" id="cd00520">
    <property type="entry name" value="RRF"/>
    <property type="match status" value="1"/>
</dbReference>
<dbReference type="FunFam" id="1.10.132.20:FF:000001">
    <property type="entry name" value="Ribosome-recycling factor"/>
    <property type="match status" value="1"/>
</dbReference>
<dbReference type="FunFam" id="3.30.1360.40:FF:000001">
    <property type="entry name" value="Ribosome-recycling factor"/>
    <property type="match status" value="1"/>
</dbReference>
<dbReference type="Gene3D" id="3.30.1360.40">
    <property type="match status" value="1"/>
</dbReference>
<dbReference type="Gene3D" id="1.10.132.20">
    <property type="entry name" value="Ribosome-recycling factor"/>
    <property type="match status" value="1"/>
</dbReference>
<dbReference type="HAMAP" id="MF_00040">
    <property type="entry name" value="RRF"/>
    <property type="match status" value="1"/>
</dbReference>
<dbReference type="InterPro" id="IPR002661">
    <property type="entry name" value="Ribosome_recyc_fac"/>
</dbReference>
<dbReference type="InterPro" id="IPR023584">
    <property type="entry name" value="Ribosome_recyc_fac_dom"/>
</dbReference>
<dbReference type="InterPro" id="IPR036191">
    <property type="entry name" value="RRF_sf"/>
</dbReference>
<dbReference type="NCBIfam" id="TIGR00496">
    <property type="entry name" value="frr"/>
    <property type="match status" value="1"/>
</dbReference>
<dbReference type="PANTHER" id="PTHR20982:SF3">
    <property type="entry name" value="MITOCHONDRIAL RIBOSOME RECYCLING FACTOR PSEUDO 1"/>
    <property type="match status" value="1"/>
</dbReference>
<dbReference type="PANTHER" id="PTHR20982">
    <property type="entry name" value="RIBOSOME RECYCLING FACTOR"/>
    <property type="match status" value="1"/>
</dbReference>
<dbReference type="Pfam" id="PF01765">
    <property type="entry name" value="RRF"/>
    <property type="match status" value="1"/>
</dbReference>
<dbReference type="SUPFAM" id="SSF55194">
    <property type="entry name" value="Ribosome recycling factor, RRF"/>
    <property type="match status" value="1"/>
</dbReference>
<name>RRF_BLOPB</name>